<keyword id="KW-1185">Reference proteome</keyword>
<comment type="function">
    <text evidence="1">Positive regulator of amyloid protein aggregation and proteotoxicity (By similarity). Induces conformational changes in amyloid proteins, such as HTT, driving them into compact formations preceding the formation of aggregates (By similarity).</text>
</comment>
<comment type="similarity">
    <text evidence="3">Belongs to the SERF family.</text>
</comment>
<name>SERF2_MOUSE</name>
<gene>
    <name type="primary">Serf2</name>
</gene>
<reference key="1">
    <citation type="journal article" date="1998" name="Nat. Genet.">
        <title>Identification of a candidate modifying gene for spinal muscular atrophy by comparative genomics.</title>
        <authorList>
            <person name="Scharf J.M."/>
            <person name="Endrizzi M.G."/>
            <person name="Wetter A."/>
            <person name="Huang S."/>
            <person name="Thompson T.G."/>
            <person name="Zerres K."/>
            <person name="Dietrich W.F."/>
            <person name="Wirth B."/>
            <person name="Kunkel L.M."/>
        </authorList>
    </citation>
    <scope>NUCLEOTIDE SEQUENCE [MRNA]</scope>
</reference>
<reference key="2">
    <citation type="journal article" date="2005" name="Science">
        <title>The transcriptional landscape of the mammalian genome.</title>
        <authorList>
            <person name="Carninci P."/>
            <person name="Kasukawa T."/>
            <person name="Katayama S."/>
            <person name="Gough J."/>
            <person name="Frith M.C."/>
            <person name="Maeda N."/>
            <person name="Oyama R."/>
            <person name="Ravasi T."/>
            <person name="Lenhard B."/>
            <person name="Wells C."/>
            <person name="Kodzius R."/>
            <person name="Shimokawa K."/>
            <person name="Bajic V.B."/>
            <person name="Brenner S.E."/>
            <person name="Batalov S."/>
            <person name="Forrest A.R."/>
            <person name="Zavolan M."/>
            <person name="Davis M.J."/>
            <person name="Wilming L.G."/>
            <person name="Aidinis V."/>
            <person name="Allen J.E."/>
            <person name="Ambesi-Impiombato A."/>
            <person name="Apweiler R."/>
            <person name="Aturaliya R.N."/>
            <person name="Bailey T.L."/>
            <person name="Bansal M."/>
            <person name="Baxter L."/>
            <person name="Beisel K.W."/>
            <person name="Bersano T."/>
            <person name="Bono H."/>
            <person name="Chalk A.M."/>
            <person name="Chiu K.P."/>
            <person name="Choudhary V."/>
            <person name="Christoffels A."/>
            <person name="Clutterbuck D.R."/>
            <person name="Crowe M.L."/>
            <person name="Dalla E."/>
            <person name="Dalrymple B.P."/>
            <person name="de Bono B."/>
            <person name="Della Gatta G."/>
            <person name="di Bernardo D."/>
            <person name="Down T."/>
            <person name="Engstrom P."/>
            <person name="Fagiolini M."/>
            <person name="Faulkner G."/>
            <person name="Fletcher C.F."/>
            <person name="Fukushima T."/>
            <person name="Furuno M."/>
            <person name="Futaki S."/>
            <person name="Gariboldi M."/>
            <person name="Georgii-Hemming P."/>
            <person name="Gingeras T.R."/>
            <person name="Gojobori T."/>
            <person name="Green R.E."/>
            <person name="Gustincich S."/>
            <person name="Harbers M."/>
            <person name="Hayashi Y."/>
            <person name="Hensch T.K."/>
            <person name="Hirokawa N."/>
            <person name="Hill D."/>
            <person name="Huminiecki L."/>
            <person name="Iacono M."/>
            <person name="Ikeo K."/>
            <person name="Iwama A."/>
            <person name="Ishikawa T."/>
            <person name="Jakt M."/>
            <person name="Kanapin A."/>
            <person name="Katoh M."/>
            <person name="Kawasawa Y."/>
            <person name="Kelso J."/>
            <person name="Kitamura H."/>
            <person name="Kitano H."/>
            <person name="Kollias G."/>
            <person name="Krishnan S.P."/>
            <person name="Kruger A."/>
            <person name="Kummerfeld S.K."/>
            <person name="Kurochkin I.V."/>
            <person name="Lareau L.F."/>
            <person name="Lazarevic D."/>
            <person name="Lipovich L."/>
            <person name="Liu J."/>
            <person name="Liuni S."/>
            <person name="McWilliam S."/>
            <person name="Madan Babu M."/>
            <person name="Madera M."/>
            <person name="Marchionni L."/>
            <person name="Matsuda H."/>
            <person name="Matsuzawa S."/>
            <person name="Miki H."/>
            <person name="Mignone F."/>
            <person name="Miyake S."/>
            <person name="Morris K."/>
            <person name="Mottagui-Tabar S."/>
            <person name="Mulder N."/>
            <person name="Nakano N."/>
            <person name="Nakauchi H."/>
            <person name="Ng P."/>
            <person name="Nilsson R."/>
            <person name="Nishiguchi S."/>
            <person name="Nishikawa S."/>
            <person name="Nori F."/>
            <person name="Ohara O."/>
            <person name="Okazaki Y."/>
            <person name="Orlando V."/>
            <person name="Pang K.C."/>
            <person name="Pavan W.J."/>
            <person name="Pavesi G."/>
            <person name="Pesole G."/>
            <person name="Petrovsky N."/>
            <person name="Piazza S."/>
            <person name="Reed J."/>
            <person name="Reid J.F."/>
            <person name="Ring B.Z."/>
            <person name="Ringwald M."/>
            <person name="Rost B."/>
            <person name="Ruan Y."/>
            <person name="Salzberg S.L."/>
            <person name="Sandelin A."/>
            <person name="Schneider C."/>
            <person name="Schoenbach C."/>
            <person name="Sekiguchi K."/>
            <person name="Semple C.A."/>
            <person name="Seno S."/>
            <person name="Sessa L."/>
            <person name="Sheng Y."/>
            <person name="Shibata Y."/>
            <person name="Shimada H."/>
            <person name="Shimada K."/>
            <person name="Silva D."/>
            <person name="Sinclair B."/>
            <person name="Sperling S."/>
            <person name="Stupka E."/>
            <person name="Sugiura K."/>
            <person name="Sultana R."/>
            <person name="Takenaka Y."/>
            <person name="Taki K."/>
            <person name="Tammoja K."/>
            <person name="Tan S.L."/>
            <person name="Tang S."/>
            <person name="Taylor M.S."/>
            <person name="Tegner J."/>
            <person name="Teichmann S.A."/>
            <person name="Ueda H.R."/>
            <person name="van Nimwegen E."/>
            <person name="Verardo R."/>
            <person name="Wei C.L."/>
            <person name="Yagi K."/>
            <person name="Yamanishi H."/>
            <person name="Zabarovsky E."/>
            <person name="Zhu S."/>
            <person name="Zimmer A."/>
            <person name="Hide W."/>
            <person name="Bult C."/>
            <person name="Grimmond S.M."/>
            <person name="Teasdale R.D."/>
            <person name="Liu E.T."/>
            <person name="Brusic V."/>
            <person name="Quackenbush J."/>
            <person name="Wahlestedt C."/>
            <person name="Mattick J.S."/>
            <person name="Hume D.A."/>
            <person name="Kai C."/>
            <person name="Sasaki D."/>
            <person name="Tomaru Y."/>
            <person name="Fukuda S."/>
            <person name="Kanamori-Katayama M."/>
            <person name="Suzuki M."/>
            <person name="Aoki J."/>
            <person name="Arakawa T."/>
            <person name="Iida J."/>
            <person name="Imamura K."/>
            <person name="Itoh M."/>
            <person name="Kato T."/>
            <person name="Kawaji H."/>
            <person name="Kawagashira N."/>
            <person name="Kawashima T."/>
            <person name="Kojima M."/>
            <person name="Kondo S."/>
            <person name="Konno H."/>
            <person name="Nakano K."/>
            <person name="Ninomiya N."/>
            <person name="Nishio T."/>
            <person name="Okada M."/>
            <person name="Plessy C."/>
            <person name="Shibata K."/>
            <person name="Shiraki T."/>
            <person name="Suzuki S."/>
            <person name="Tagami M."/>
            <person name="Waki K."/>
            <person name="Watahiki A."/>
            <person name="Okamura-Oho Y."/>
            <person name="Suzuki H."/>
            <person name="Kawai J."/>
            <person name="Hayashizaki Y."/>
        </authorList>
    </citation>
    <scope>NUCLEOTIDE SEQUENCE [LARGE SCALE MRNA]</scope>
    <source>
        <strain>C57BL/6J</strain>
        <tissue>Embryo</tissue>
        <tissue>Embryonic stem cell</tissue>
        <tissue>Kidney</tissue>
        <tissue>Stomach</tissue>
    </source>
</reference>
<reference key="3">
    <citation type="journal article" date="2009" name="PLoS Biol.">
        <title>Lineage-specific biology revealed by a finished genome assembly of the mouse.</title>
        <authorList>
            <person name="Church D.M."/>
            <person name="Goodstadt L."/>
            <person name="Hillier L.W."/>
            <person name="Zody M.C."/>
            <person name="Goldstein S."/>
            <person name="She X."/>
            <person name="Bult C.J."/>
            <person name="Agarwala R."/>
            <person name="Cherry J.L."/>
            <person name="DiCuccio M."/>
            <person name="Hlavina W."/>
            <person name="Kapustin Y."/>
            <person name="Meric P."/>
            <person name="Maglott D."/>
            <person name="Birtle Z."/>
            <person name="Marques A.C."/>
            <person name="Graves T."/>
            <person name="Zhou S."/>
            <person name="Teague B."/>
            <person name="Potamousis K."/>
            <person name="Churas C."/>
            <person name="Place M."/>
            <person name="Herschleb J."/>
            <person name="Runnheim R."/>
            <person name="Forrest D."/>
            <person name="Amos-Landgraf J."/>
            <person name="Schwartz D.C."/>
            <person name="Cheng Z."/>
            <person name="Lindblad-Toh K."/>
            <person name="Eichler E.E."/>
            <person name="Ponting C.P."/>
        </authorList>
    </citation>
    <scope>NUCLEOTIDE SEQUENCE [LARGE SCALE GENOMIC DNA]</scope>
    <source>
        <strain>C57BL/6J</strain>
    </source>
</reference>
<reference key="4">
    <citation type="journal article" date="2010" name="Cell">
        <title>A tissue-specific atlas of mouse protein phosphorylation and expression.</title>
        <authorList>
            <person name="Huttlin E.L."/>
            <person name="Jedrychowski M.P."/>
            <person name="Elias J.E."/>
            <person name="Goswami T."/>
            <person name="Rad R."/>
            <person name="Beausoleil S.A."/>
            <person name="Villen J."/>
            <person name="Haas W."/>
            <person name="Sowa M.E."/>
            <person name="Gygi S.P."/>
        </authorList>
    </citation>
    <scope>IDENTIFICATION BY MASS SPECTROMETRY [LARGE SCALE ANALYSIS]</scope>
    <source>
        <tissue>Pancreas</tissue>
    </source>
</reference>
<organism>
    <name type="scientific">Mus musculus</name>
    <name type="common">Mouse</name>
    <dbReference type="NCBI Taxonomy" id="10090"/>
    <lineage>
        <taxon>Eukaryota</taxon>
        <taxon>Metazoa</taxon>
        <taxon>Chordata</taxon>
        <taxon>Craniata</taxon>
        <taxon>Vertebrata</taxon>
        <taxon>Euteleostomi</taxon>
        <taxon>Mammalia</taxon>
        <taxon>Eutheria</taxon>
        <taxon>Euarchontoglires</taxon>
        <taxon>Glires</taxon>
        <taxon>Rodentia</taxon>
        <taxon>Myomorpha</taxon>
        <taxon>Muroidea</taxon>
        <taxon>Muridae</taxon>
        <taxon>Murinae</taxon>
        <taxon>Mus</taxon>
        <taxon>Mus</taxon>
    </lineage>
</organism>
<feature type="chain" id="PRO_0000050713" description="Small EDRK-rich factor 2">
    <location>
        <begin position="1"/>
        <end position="59"/>
    </location>
</feature>
<feature type="region of interest" description="Disordered" evidence="2">
    <location>
        <begin position="1"/>
        <end position="59"/>
    </location>
</feature>
<feature type="compositionally biased region" description="Basic and acidic residues" evidence="2">
    <location>
        <begin position="1"/>
        <end position="30"/>
    </location>
</feature>
<feature type="compositionally biased region" description="Basic and acidic residues" evidence="2">
    <location>
        <begin position="50"/>
        <end position="59"/>
    </location>
</feature>
<evidence type="ECO:0000250" key="1">
    <source>
        <dbReference type="UniProtKB" id="P84101"/>
    </source>
</evidence>
<evidence type="ECO:0000256" key="2">
    <source>
        <dbReference type="SAM" id="MobiDB-lite"/>
    </source>
</evidence>
<evidence type="ECO:0000305" key="3"/>
<accession>P84102</accession>
<accession>A2ARQ3</accession>
<accession>O75918</accession>
<accession>O88891</accession>
<accession>Q9BZH7</accession>
<dbReference type="EMBL" id="AF073297">
    <property type="protein sequence ID" value="AAC63515.1"/>
    <property type="molecule type" value="mRNA"/>
</dbReference>
<dbReference type="EMBL" id="AK002351">
    <property type="protein sequence ID" value="BAB22030.3"/>
    <property type="molecule type" value="mRNA"/>
</dbReference>
<dbReference type="EMBL" id="AK008802">
    <property type="status" value="NOT_ANNOTATED_CDS"/>
    <property type="molecule type" value="mRNA"/>
</dbReference>
<dbReference type="EMBL" id="AK010749">
    <property type="protein sequence ID" value="BAB27157.1"/>
    <property type="molecule type" value="mRNA"/>
</dbReference>
<dbReference type="EMBL" id="AK012395">
    <property type="status" value="NOT_ANNOTATED_CDS"/>
    <property type="molecule type" value="mRNA"/>
</dbReference>
<dbReference type="EMBL" id="AK012603">
    <property type="status" value="NOT_ANNOTATED_CDS"/>
    <property type="molecule type" value="mRNA"/>
</dbReference>
<dbReference type="EMBL" id="AK018746">
    <property type="status" value="NOT_ANNOTATED_CDS"/>
    <property type="molecule type" value="mRNA"/>
</dbReference>
<dbReference type="EMBL" id="AL845466">
    <property type="status" value="NOT_ANNOTATED_CDS"/>
    <property type="molecule type" value="Genomic_DNA"/>
</dbReference>
<dbReference type="CCDS" id="CCDS16645.1"/>
<dbReference type="RefSeq" id="NP_035484.1">
    <property type="nucleotide sequence ID" value="NM_011354.3"/>
</dbReference>
<dbReference type="BioGRID" id="237553">
    <property type="interactions" value="1"/>
</dbReference>
<dbReference type="FunCoup" id="P84102">
    <property type="interactions" value="45"/>
</dbReference>
<dbReference type="STRING" id="10090.ENSMUSP00000097074"/>
<dbReference type="GlyGen" id="P84102">
    <property type="glycosylation" value="1 site, 1 O-linked glycan (1 site)"/>
</dbReference>
<dbReference type="iPTMnet" id="P84102"/>
<dbReference type="PhosphoSitePlus" id="P84102"/>
<dbReference type="PaxDb" id="10090-ENSMUSP00000123181"/>
<dbReference type="PeptideAtlas" id="P84102"/>
<dbReference type="ProteomicsDB" id="256622"/>
<dbReference type="Pumba" id="P84102"/>
<dbReference type="TopDownProteomics" id="P84102"/>
<dbReference type="Antibodypedia" id="34934">
    <property type="antibodies" value="77 antibodies from 17 providers"/>
</dbReference>
<dbReference type="Ensembl" id="ENSMUST00000139253.8">
    <property type="protein sequence ID" value="ENSMUSP00000123181.2"/>
    <property type="gene ID" value="ENSMUSG00000074884.13"/>
</dbReference>
<dbReference type="GeneID" id="378702"/>
<dbReference type="KEGG" id="mmu:378702"/>
<dbReference type="UCSC" id="uc008lzd.2">
    <property type="organism name" value="mouse"/>
</dbReference>
<dbReference type="AGR" id="MGI:1337041"/>
<dbReference type="CTD" id="10169"/>
<dbReference type="MGI" id="MGI:1337041">
    <property type="gene designation" value="Serf2"/>
</dbReference>
<dbReference type="VEuPathDB" id="HostDB:ENSMUSG00000074884"/>
<dbReference type="eggNOG" id="KOG4488">
    <property type="taxonomic scope" value="Eukaryota"/>
</dbReference>
<dbReference type="GeneTree" id="ENSGT00910000144347"/>
<dbReference type="HOGENOM" id="CLU_165034_1_1_1"/>
<dbReference type="InParanoid" id="P84102"/>
<dbReference type="OMA" id="HAKKQTE"/>
<dbReference type="OrthoDB" id="18018at2759"/>
<dbReference type="TreeFam" id="TF330718"/>
<dbReference type="BioGRID-ORCS" id="378702">
    <property type="hits" value="4 hits in 76 CRISPR screens"/>
</dbReference>
<dbReference type="ChiTaRS" id="Serf2">
    <property type="organism name" value="mouse"/>
</dbReference>
<dbReference type="PRO" id="PR:P84102"/>
<dbReference type="Proteomes" id="UP000000589">
    <property type="component" value="Chromosome 2"/>
</dbReference>
<dbReference type="RNAct" id="P84102">
    <property type="molecule type" value="protein"/>
</dbReference>
<dbReference type="Bgee" id="ENSMUSG00000074884">
    <property type="expression patterns" value="Expressed in white adipose tissue and 66 other cell types or tissues"/>
</dbReference>
<dbReference type="ExpressionAtlas" id="P84102">
    <property type="expression patterns" value="baseline and differential"/>
</dbReference>
<dbReference type="GO" id="GO:0005829">
    <property type="term" value="C:cytosol"/>
    <property type="evidence" value="ECO:0000250"/>
    <property type="project" value="UniProtKB"/>
</dbReference>
<dbReference type="GO" id="GO:0005634">
    <property type="term" value="C:nucleus"/>
    <property type="evidence" value="ECO:0000250"/>
    <property type="project" value="UniProtKB"/>
</dbReference>
<dbReference type="InterPro" id="IPR007513">
    <property type="entry name" value="SERF-like_N"/>
</dbReference>
<dbReference type="InterPro" id="IPR040211">
    <property type="entry name" value="SERF1/2-like"/>
</dbReference>
<dbReference type="PANTHER" id="PTHR13596">
    <property type="entry name" value="SMALL EDRK-RICH FACTOR 1"/>
    <property type="match status" value="1"/>
</dbReference>
<dbReference type="PANTHER" id="PTHR13596:SF2">
    <property type="entry name" value="SMALL EDRK-RICH FACTOR 2"/>
    <property type="match status" value="1"/>
</dbReference>
<dbReference type="Pfam" id="PF04419">
    <property type="entry name" value="SERF-like_N"/>
    <property type="match status" value="1"/>
</dbReference>
<proteinExistence type="evidence at protein level"/>
<protein>
    <recommendedName>
        <fullName>Small EDRK-rich factor 2</fullName>
    </recommendedName>
    <alternativeName>
        <fullName>Protein 4F5-related</fullName>
        <shortName>4F5rel</shortName>
    </alternativeName>
</protein>
<sequence length="59" mass="6900">MTRGNQRELARQKNMKKQSDSVKGKRRDDGLSAAARKQRDSEIMQQKQKKANEKKEEPK</sequence>